<gene>
    <name evidence="1" type="primary">rplL</name>
    <name type="ordered locus">SAOUHSC_00521</name>
</gene>
<protein>
    <recommendedName>
        <fullName evidence="1">Large ribosomal subunit protein bL12</fullName>
    </recommendedName>
    <alternativeName>
        <fullName evidence="2">50S ribosomal protein L7/L12</fullName>
    </alternativeName>
</protein>
<name>RL7_STAA8</name>
<feature type="chain" id="PRO_0000157580" description="Large ribosomal subunit protein bL12">
    <location>
        <begin position="1"/>
        <end position="122"/>
    </location>
</feature>
<keyword id="KW-1185">Reference proteome</keyword>
<keyword id="KW-0687">Ribonucleoprotein</keyword>
<keyword id="KW-0689">Ribosomal protein</keyword>
<proteinExistence type="inferred from homology"/>
<sequence>MANHEQIIEAIKEMSVLELNDLVKAIEEEFGVTAAAPVAVAGAAGGADAAAEKTEFDVELTSAGSSKIKVVKAVKEATGLGLKDAKELVDGAPKVIKEALPKEEAEKLKEQLEEVGATVELK</sequence>
<evidence type="ECO:0000255" key="1">
    <source>
        <dbReference type="HAMAP-Rule" id="MF_00368"/>
    </source>
</evidence>
<evidence type="ECO:0000305" key="2"/>
<accession>P48860</accession>
<accession>Q2G0N8</accession>
<reference key="1">
    <citation type="book" date="2006" name="Gram positive pathogens, 2nd edition">
        <title>The Staphylococcus aureus NCTC 8325 genome.</title>
        <editorList>
            <person name="Fischetti V."/>
            <person name="Novick R."/>
            <person name="Ferretti J."/>
            <person name="Portnoy D."/>
            <person name="Rood J."/>
        </editorList>
        <authorList>
            <person name="Gillaspy A.F."/>
            <person name="Worrell V."/>
            <person name="Orvis J."/>
            <person name="Roe B.A."/>
            <person name="Dyer D.W."/>
            <person name="Iandolo J.J."/>
        </authorList>
    </citation>
    <scope>NUCLEOTIDE SEQUENCE [LARGE SCALE GENOMIC DNA]</scope>
    <source>
        <strain>NCTC 8325 / PS 47</strain>
    </source>
</reference>
<reference key="2">
    <citation type="journal article" date="1995" name="Biochim. Biophys. Acta">
        <title>Nucleotide sequence of the Staphylococcus aureus RNA polymerase rpoB gene and comparison of its predicted amino acid sequence with those of other bacteria.</title>
        <authorList>
            <person name="Aboshkiwa M.A."/>
            <person name="Rowland G."/>
            <person name="Coleman G."/>
        </authorList>
    </citation>
    <scope>NUCLEOTIDE SEQUENCE [GENOMIC DNA] OF 50-122</scope>
</reference>
<dbReference type="EMBL" id="CP000253">
    <property type="protein sequence ID" value="ABD29670.1"/>
    <property type="molecule type" value="Genomic_DNA"/>
</dbReference>
<dbReference type="EMBL" id="X64172">
    <property type="protein sequence ID" value="CAA45510.1"/>
    <property type="molecule type" value="Genomic_DNA"/>
</dbReference>
<dbReference type="PIR" id="S59954">
    <property type="entry name" value="S59954"/>
</dbReference>
<dbReference type="RefSeq" id="WP_001273586.1">
    <property type="nucleotide sequence ID" value="NZ_LS483365.1"/>
</dbReference>
<dbReference type="RefSeq" id="YP_499094.1">
    <property type="nucleotide sequence ID" value="NC_007795.1"/>
</dbReference>
<dbReference type="SMR" id="P48860"/>
<dbReference type="STRING" id="93061.SAOUHSC_00521"/>
<dbReference type="PaxDb" id="1280-SAXN108_0594"/>
<dbReference type="GeneID" id="3920375"/>
<dbReference type="GeneID" id="98344874"/>
<dbReference type="KEGG" id="sao:SAOUHSC_00521"/>
<dbReference type="PATRIC" id="fig|93061.5.peg.468"/>
<dbReference type="eggNOG" id="COG0222">
    <property type="taxonomic scope" value="Bacteria"/>
</dbReference>
<dbReference type="HOGENOM" id="CLU_086499_3_2_9"/>
<dbReference type="OrthoDB" id="9811748at2"/>
<dbReference type="PRO" id="PR:P48860"/>
<dbReference type="Proteomes" id="UP000008816">
    <property type="component" value="Chromosome"/>
</dbReference>
<dbReference type="GO" id="GO:0022625">
    <property type="term" value="C:cytosolic large ribosomal subunit"/>
    <property type="evidence" value="ECO:0000318"/>
    <property type="project" value="GO_Central"/>
</dbReference>
<dbReference type="GO" id="GO:0003729">
    <property type="term" value="F:mRNA binding"/>
    <property type="evidence" value="ECO:0000318"/>
    <property type="project" value="GO_Central"/>
</dbReference>
<dbReference type="GO" id="GO:0003735">
    <property type="term" value="F:structural constituent of ribosome"/>
    <property type="evidence" value="ECO:0000318"/>
    <property type="project" value="GO_Central"/>
</dbReference>
<dbReference type="GO" id="GO:0006412">
    <property type="term" value="P:translation"/>
    <property type="evidence" value="ECO:0000318"/>
    <property type="project" value="GO_Central"/>
</dbReference>
<dbReference type="CDD" id="cd00387">
    <property type="entry name" value="Ribosomal_L7_L12"/>
    <property type="match status" value="1"/>
</dbReference>
<dbReference type="FunFam" id="1.20.5.710:FF:000002">
    <property type="entry name" value="50S ribosomal protein L7/L12"/>
    <property type="match status" value="1"/>
</dbReference>
<dbReference type="FunFam" id="3.30.1390.10:FF:000001">
    <property type="entry name" value="50S ribosomal protein L7/L12"/>
    <property type="match status" value="1"/>
</dbReference>
<dbReference type="Gene3D" id="3.30.1390.10">
    <property type="match status" value="1"/>
</dbReference>
<dbReference type="Gene3D" id="1.20.5.710">
    <property type="entry name" value="Single helix bin"/>
    <property type="match status" value="1"/>
</dbReference>
<dbReference type="HAMAP" id="MF_00368">
    <property type="entry name" value="Ribosomal_bL12"/>
    <property type="match status" value="1"/>
</dbReference>
<dbReference type="InterPro" id="IPR000206">
    <property type="entry name" value="Ribosomal_bL12"/>
</dbReference>
<dbReference type="InterPro" id="IPR013823">
    <property type="entry name" value="Ribosomal_bL12_C"/>
</dbReference>
<dbReference type="InterPro" id="IPR014719">
    <property type="entry name" value="Ribosomal_bL12_C/ClpS-like"/>
</dbReference>
<dbReference type="InterPro" id="IPR008932">
    <property type="entry name" value="Ribosomal_bL12_oligo"/>
</dbReference>
<dbReference type="InterPro" id="IPR036235">
    <property type="entry name" value="Ribosomal_bL12_oligo_N_sf"/>
</dbReference>
<dbReference type="NCBIfam" id="TIGR00855">
    <property type="entry name" value="L12"/>
    <property type="match status" value="1"/>
</dbReference>
<dbReference type="PANTHER" id="PTHR45987">
    <property type="entry name" value="39S RIBOSOMAL PROTEIN L12"/>
    <property type="match status" value="1"/>
</dbReference>
<dbReference type="PANTHER" id="PTHR45987:SF4">
    <property type="entry name" value="LARGE RIBOSOMAL SUBUNIT PROTEIN BL12M"/>
    <property type="match status" value="1"/>
</dbReference>
<dbReference type="Pfam" id="PF00542">
    <property type="entry name" value="Ribosomal_L12"/>
    <property type="match status" value="1"/>
</dbReference>
<dbReference type="Pfam" id="PF16320">
    <property type="entry name" value="Ribosomal_L12_N"/>
    <property type="match status" value="1"/>
</dbReference>
<dbReference type="SUPFAM" id="SSF54736">
    <property type="entry name" value="ClpS-like"/>
    <property type="match status" value="1"/>
</dbReference>
<dbReference type="SUPFAM" id="SSF48300">
    <property type="entry name" value="Ribosomal protein L7/12, oligomerisation (N-terminal) domain"/>
    <property type="match status" value="1"/>
</dbReference>
<organism>
    <name type="scientific">Staphylococcus aureus (strain NCTC 8325 / PS 47)</name>
    <dbReference type="NCBI Taxonomy" id="93061"/>
    <lineage>
        <taxon>Bacteria</taxon>
        <taxon>Bacillati</taxon>
        <taxon>Bacillota</taxon>
        <taxon>Bacilli</taxon>
        <taxon>Bacillales</taxon>
        <taxon>Staphylococcaceae</taxon>
        <taxon>Staphylococcus</taxon>
    </lineage>
</organism>
<comment type="function">
    <text evidence="1">Forms part of the ribosomal stalk which helps the ribosome interact with GTP-bound translation factors. Is thus essential for accurate translation.</text>
</comment>
<comment type="subunit">
    <text evidence="1">Homodimer. Part of the ribosomal stalk of the 50S ribosomal subunit. Forms a multimeric L10(L12)X complex, where L10 forms an elongated spine to which 2 to 4 L12 dimers bind in a sequential fashion. Binds GTP-bound translation factors.</text>
</comment>
<comment type="similarity">
    <text evidence="1">Belongs to the bacterial ribosomal protein bL12 family.</text>
</comment>